<reference key="1">
    <citation type="journal article" date="2009" name="Appl. Environ. Microbiol.">
        <title>Genomic analysis of 'Elusimicrobium minutum,' the first cultivated representative of the phylum 'Elusimicrobia' (formerly termite group 1).</title>
        <authorList>
            <person name="Herlemann D.P.R."/>
            <person name="Geissinger O."/>
            <person name="Ikeda-Ohtsubo W."/>
            <person name="Kunin V."/>
            <person name="Sun H."/>
            <person name="Lapidus A."/>
            <person name="Hugenholtz P."/>
            <person name="Brune A."/>
        </authorList>
    </citation>
    <scope>NUCLEOTIDE SEQUENCE [LARGE SCALE GENOMIC DNA]</scope>
    <source>
        <strain>Pei191</strain>
    </source>
</reference>
<sequence>MLMPKRVKYRKPFSAPRIKGVAKRGATVSFGEYGLKALEPKWVTARQIEAARIVISRYAKKKGKMWTRVFPDKAITKHPAETRMGKGKGAPDHWVAVVKPGHILFEVEGLDLDTTKRAMRMASDKLPIKTKLVSRR</sequence>
<feature type="chain" id="PRO_1000142971" description="Large ribosomal subunit protein uL16">
    <location>
        <begin position="1"/>
        <end position="136"/>
    </location>
</feature>
<dbReference type="EMBL" id="CP001055">
    <property type="protein sequence ID" value="ACC98960.1"/>
    <property type="molecule type" value="Genomic_DNA"/>
</dbReference>
<dbReference type="RefSeq" id="WP_012415575.1">
    <property type="nucleotide sequence ID" value="NC_010644.1"/>
</dbReference>
<dbReference type="SMR" id="B2KEL4"/>
<dbReference type="STRING" id="445932.Emin_1411"/>
<dbReference type="KEGG" id="emi:Emin_1411"/>
<dbReference type="HOGENOM" id="CLU_078858_2_1_0"/>
<dbReference type="OrthoDB" id="9802589at2"/>
<dbReference type="Proteomes" id="UP000001029">
    <property type="component" value="Chromosome"/>
</dbReference>
<dbReference type="GO" id="GO:0022625">
    <property type="term" value="C:cytosolic large ribosomal subunit"/>
    <property type="evidence" value="ECO:0007669"/>
    <property type="project" value="TreeGrafter"/>
</dbReference>
<dbReference type="GO" id="GO:0019843">
    <property type="term" value="F:rRNA binding"/>
    <property type="evidence" value="ECO:0007669"/>
    <property type="project" value="UniProtKB-UniRule"/>
</dbReference>
<dbReference type="GO" id="GO:0003735">
    <property type="term" value="F:structural constituent of ribosome"/>
    <property type="evidence" value="ECO:0007669"/>
    <property type="project" value="InterPro"/>
</dbReference>
<dbReference type="GO" id="GO:0000049">
    <property type="term" value="F:tRNA binding"/>
    <property type="evidence" value="ECO:0007669"/>
    <property type="project" value="UniProtKB-KW"/>
</dbReference>
<dbReference type="GO" id="GO:0006412">
    <property type="term" value="P:translation"/>
    <property type="evidence" value="ECO:0007669"/>
    <property type="project" value="UniProtKB-UniRule"/>
</dbReference>
<dbReference type="CDD" id="cd01433">
    <property type="entry name" value="Ribosomal_L16_L10e"/>
    <property type="match status" value="1"/>
</dbReference>
<dbReference type="FunFam" id="3.90.1170.10:FF:000001">
    <property type="entry name" value="50S ribosomal protein L16"/>
    <property type="match status" value="1"/>
</dbReference>
<dbReference type="Gene3D" id="3.90.1170.10">
    <property type="entry name" value="Ribosomal protein L10e/L16"/>
    <property type="match status" value="1"/>
</dbReference>
<dbReference type="HAMAP" id="MF_01342">
    <property type="entry name" value="Ribosomal_uL16"/>
    <property type="match status" value="1"/>
</dbReference>
<dbReference type="InterPro" id="IPR047873">
    <property type="entry name" value="Ribosomal_uL16"/>
</dbReference>
<dbReference type="InterPro" id="IPR000114">
    <property type="entry name" value="Ribosomal_uL16_bact-type"/>
</dbReference>
<dbReference type="InterPro" id="IPR020798">
    <property type="entry name" value="Ribosomal_uL16_CS"/>
</dbReference>
<dbReference type="InterPro" id="IPR016180">
    <property type="entry name" value="Ribosomal_uL16_dom"/>
</dbReference>
<dbReference type="InterPro" id="IPR036920">
    <property type="entry name" value="Ribosomal_uL16_sf"/>
</dbReference>
<dbReference type="NCBIfam" id="TIGR01164">
    <property type="entry name" value="rplP_bact"/>
    <property type="match status" value="1"/>
</dbReference>
<dbReference type="PANTHER" id="PTHR12220">
    <property type="entry name" value="50S/60S RIBOSOMAL PROTEIN L16"/>
    <property type="match status" value="1"/>
</dbReference>
<dbReference type="PANTHER" id="PTHR12220:SF13">
    <property type="entry name" value="LARGE RIBOSOMAL SUBUNIT PROTEIN UL16M"/>
    <property type="match status" value="1"/>
</dbReference>
<dbReference type="Pfam" id="PF00252">
    <property type="entry name" value="Ribosomal_L16"/>
    <property type="match status" value="1"/>
</dbReference>
<dbReference type="PRINTS" id="PR00060">
    <property type="entry name" value="RIBOSOMALL16"/>
</dbReference>
<dbReference type="SUPFAM" id="SSF54686">
    <property type="entry name" value="Ribosomal protein L16p/L10e"/>
    <property type="match status" value="1"/>
</dbReference>
<dbReference type="PROSITE" id="PS00701">
    <property type="entry name" value="RIBOSOMAL_L16_2"/>
    <property type="match status" value="1"/>
</dbReference>
<keyword id="KW-1185">Reference proteome</keyword>
<keyword id="KW-0687">Ribonucleoprotein</keyword>
<keyword id="KW-0689">Ribosomal protein</keyword>
<keyword id="KW-0694">RNA-binding</keyword>
<keyword id="KW-0699">rRNA-binding</keyword>
<keyword id="KW-0820">tRNA-binding</keyword>
<gene>
    <name evidence="1" type="primary">rplP</name>
    <name type="ordered locus">Emin_1411</name>
</gene>
<name>RL16_ELUMP</name>
<organism>
    <name type="scientific">Elusimicrobium minutum (strain Pei191)</name>
    <dbReference type="NCBI Taxonomy" id="445932"/>
    <lineage>
        <taxon>Bacteria</taxon>
        <taxon>Pseudomonadati</taxon>
        <taxon>Elusimicrobiota</taxon>
        <taxon>Elusimicrobia</taxon>
        <taxon>Elusimicrobiales</taxon>
        <taxon>Elusimicrobiaceae</taxon>
        <taxon>Elusimicrobium</taxon>
    </lineage>
</organism>
<comment type="function">
    <text evidence="1">Binds 23S rRNA and is also seen to make contacts with the A and possibly P site tRNAs.</text>
</comment>
<comment type="subunit">
    <text evidence="1">Part of the 50S ribosomal subunit.</text>
</comment>
<comment type="similarity">
    <text evidence="1">Belongs to the universal ribosomal protein uL16 family.</text>
</comment>
<proteinExistence type="inferred from homology"/>
<accession>B2KEL4</accession>
<evidence type="ECO:0000255" key="1">
    <source>
        <dbReference type="HAMAP-Rule" id="MF_01342"/>
    </source>
</evidence>
<evidence type="ECO:0000305" key="2"/>
<protein>
    <recommendedName>
        <fullName evidence="1">Large ribosomal subunit protein uL16</fullName>
    </recommendedName>
    <alternativeName>
        <fullName evidence="2">50S ribosomal protein L16</fullName>
    </alternativeName>
</protein>